<proteinExistence type="inferred from homology"/>
<sequence>MHLPSLSLAWALAGSSLALPQAEQPVLQDDRASSRAAAVKEAFSHAWDGYKKYAFPHDELHPISNGYGNSRNGWGASAVDALSTAIVMRNATIVHEILDHIATIDYSKTSDTVSLFETTIRYLGGMLSGYDLLKGPAADLVKDTSKVDILLKQSKNLGDILKFAFDTPSGVPYNNINITSHGHDGAKTNGLAVTGTLVLEWTRLSDLTGDPEYAQLSQKAESYLLHPQPSSAEPFPGLIGSNIDIKTGQFTDGHVSWNGGDDSYYEYLIKMYVYDPTRFALYRDRWVAAAESSIEHLASHPASRPDLTFLATYDGGRYGLSSQHLACFDGGNFLLGGTVLDRRDLIDFGLALVDACHETYSQTLTGIGPESFGWDANSVPADQKELYERAGFYVQNGAYILRPEVIESFYYAWRVTGRSEYRDWVWTAFVAINKTCRTGSGYAGLTNVNAENGGGRYDNQESFLFAEVLKYAYLTHSEELMAAEDAWQVQRGDGNQFVFNTEAHPIRVHHS</sequence>
<comment type="function">
    <text evidence="1">Involved in the maturation of Asn-linked oligosaccharides. Progressively trims alpha-1,2-linked mannose residues from Man(9)GlcNAc(2) to produce Man(5)GlcNAc(2) (By similarity).</text>
</comment>
<comment type="catalytic activity">
    <reaction evidence="3">
        <text>N(4)-(alpha-D-Man-(1-&gt;2)-alpha-D-Man-(1-&gt;2)-alpha-D-Man-(1-&gt;3)-[alpha-D-Man-(1-&gt;2)-alpha-D-Man-(1-&gt;3)-[alpha-D-Man-(1-&gt;2)-alpha-D-Man-(1-&gt;6)]-alpha-D-Man-(1-&gt;6)]-beta-D-Man-(1-&gt;4)-beta-D-GlcNAc-(1-&gt;4)-beta-D-GlcNAc)-L-asparaginyl-[protein] (N-glucan mannose isomer 9A1,2,3B1,2,3) + 4 H2O = N(4)-(alpha-D-Man-(1-&gt;3)-[alpha-D-Man-(1-&gt;3)-[alpha-D-Man-(1-&gt;6)]-alpha-D-Man-(1-&gt;6)]-beta-D-Man-(1-&gt;4)-beta-D-GlcNAc-(1-&gt;4)-beta-D-GlcNAc)-L-asparaginyl-[protein] (N-glucan mannose isomer 5A1,2) + 4 beta-D-mannose</text>
        <dbReference type="Rhea" id="RHEA:56008"/>
        <dbReference type="Rhea" id="RHEA-COMP:14356"/>
        <dbReference type="Rhea" id="RHEA-COMP:14367"/>
        <dbReference type="ChEBI" id="CHEBI:15377"/>
        <dbReference type="ChEBI" id="CHEBI:28563"/>
        <dbReference type="ChEBI" id="CHEBI:59087"/>
        <dbReference type="ChEBI" id="CHEBI:139493"/>
        <dbReference type="EC" id="3.2.1.113"/>
    </reaction>
</comment>
<comment type="catalytic activity">
    <reaction evidence="3">
        <text>N(4)-(alpha-D-Man-(1-&gt;2)-alpha-D-Man-(1-&gt;2)-alpha-D-Man-(1-&gt;3)-[alpha-D-Man-(1-&gt;3)-[alpha-D-Man-(1-&gt;2)-alpha-D-Man-(1-&gt;6)]-alpha-D-Man-(1-&gt;6)]-beta-D-Man-(1-&gt;4)-beta-D-GlcNAc-(1-&gt;4)-beta-D-GlcNAc)-L-asparaginyl-[protein] (N-glucan mannose isomer 8A1,2,3B1,3) + 3 H2O = N(4)-(alpha-D-Man-(1-&gt;3)-[alpha-D-Man-(1-&gt;3)-[alpha-D-Man-(1-&gt;6)]-alpha-D-Man-(1-&gt;6)]-beta-D-Man-(1-&gt;4)-beta-D-GlcNAc-(1-&gt;4)-beta-D-GlcNAc)-L-asparaginyl-[protein] (N-glucan mannose isomer 5A1,2) + 3 beta-D-mannose</text>
        <dbReference type="Rhea" id="RHEA:56028"/>
        <dbReference type="Rhea" id="RHEA-COMP:14358"/>
        <dbReference type="Rhea" id="RHEA-COMP:14367"/>
        <dbReference type="ChEBI" id="CHEBI:15377"/>
        <dbReference type="ChEBI" id="CHEBI:28563"/>
        <dbReference type="ChEBI" id="CHEBI:59087"/>
        <dbReference type="ChEBI" id="CHEBI:60628"/>
        <dbReference type="EC" id="3.2.1.113"/>
    </reaction>
</comment>
<comment type="cofactor">
    <cofactor evidence="4">
        <name>Ca(2+)</name>
        <dbReference type="ChEBI" id="CHEBI:29108"/>
    </cofactor>
    <cofactor evidence="4">
        <name>Mg(2+)</name>
        <dbReference type="ChEBI" id="CHEBI:18420"/>
    </cofactor>
    <text evidence="4">Ca(2+). Can also use Mg(2+), but with lower efficiency.</text>
</comment>
<comment type="pathway">
    <text evidence="3">Protein modification; protein glycosylation.</text>
</comment>
<comment type="subunit">
    <text evidence="1">Monomer.</text>
</comment>
<comment type="subcellular location">
    <subcellularLocation>
        <location evidence="1">Cytoplasmic vesicle lumen</location>
    </subcellularLocation>
</comment>
<comment type="similarity">
    <text evidence="6">Belongs to the glycosyl hydrolase 47 family.</text>
</comment>
<dbReference type="EC" id="3.2.1.113" evidence="3"/>
<dbReference type="EMBL" id="DS027059">
    <property type="protein sequence ID" value="EAW07379.1"/>
    <property type="molecule type" value="Genomic_DNA"/>
</dbReference>
<dbReference type="RefSeq" id="XP_001268805.1">
    <property type="nucleotide sequence ID" value="XM_001268804.1"/>
</dbReference>
<dbReference type="SMR" id="A1CP08"/>
<dbReference type="STRING" id="344612.A1CP08"/>
<dbReference type="GlyCosmos" id="A1CP08">
    <property type="glycosylation" value="3 sites, No reported glycans"/>
</dbReference>
<dbReference type="EnsemblFungi" id="EAW07379">
    <property type="protein sequence ID" value="EAW07379"/>
    <property type="gene ID" value="ACLA_020870"/>
</dbReference>
<dbReference type="GeneID" id="4701674"/>
<dbReference type="KEGG" id="act:ACLA_020870"/>
<dbReference type="VEuPathDB" id="FungiDB:ACLA_020870"/>
<dbReference type="eggNOG" id="KOG2204">
    <property type="taxonomic scope" value="Eukaryota"/>
</dbReference>
<dbReference type="HOGENOM" id="CLU_003818_0_2_1"/>
<dbReference type="OMA" id="PESFGWD"/>
<dbReference type="OrthoDB" id="8118055at2759"/>
<dbReference type="UniPathway" id="UPA00378"/>
<dbReference type="Proteomes" id="UP000006701">
    <property type="component" value="Unassembled WGS sequence"/>
</dbReference>
<dbReference type="GO" id="GO:0060205">
    <property type="term" value="C:cytoplasmic vesicle lumen"/>
    <property type="evidence" value="ECO:0007669"/>
    <property type="project" value="UniProtKB-SubCell"/>
</dbReference>
<dbReference type="GO" id="GO:0005783">
    <property type="term" value="C:endoplasmic reticulum"/>
    <property type="evidence" value="ECO:0007669"/>
    <property type="project" value="TreeGrafter"/>
</dbReference>
<dbReference type="GO" id="GO:0016020">
    <property type="term" value="C:membrane"/>
    <property type="evidence" value="ECO:0007669"/>
    <property type="project" value="InterPro"/>
</dbReference>
<dbReference type="GO" id="GO:0005509">
    <property type="term" value="F:calcium ion binding"/>
    <property type="evidence" value="ECO:0007669"/>
    <property type="project" value="InterPro"/>
</dbReference>
<dbReference type="GO" id="GO:0004571">
    <property type="term" value="F:mannosyl-oligosaccharide 1,2-alpha-mannosidase activity"/>
    <property type="evidence" value="ECO:0007669"/>
    <property type="project" value="UniProtKB-EC"/>
</dbReference>
<dbReference type="GO" id="GO:0005975">
    <property type="term" value="P:carbohydrate metabolic process"/>
    <property type="evidence" value="ECO:0007669"/>
    <property type="project" value="InterPro"/>
</dbReference>
<dbReference type="GO" id="GO:0036503">
    <property type="term" value="P:ERAD pathway"/>
    <property type="evidence" value="ECO:0007669"/>
    <property type="project" value="UniProtKB-ARBA"/>
</dbReference>
<dbReference type="GO" id="GO:0006486">
    <property type="term" value="P:protein glycosylation"/>
    <property type="evidence" value="ECO:0007669"/>
    <property type="project" value="UniProtKB-UniPathway"/>
</dbReference>
<dbReference type="FunFam" id="1.50.10.10:FF:000047">
    <property type="entry name" value="Mannosyl-oligosaccharide alpha-1,2-mannosidase"/>
    <property type="match status" value="1"/>
</dbReference>
<dbReference type="Gene3D" id="1.50.10.10">
    <property type="match status" value="1"/>
</dbReference>
<dbReference type="InterPro" id="IPR012341">
    <property type="entry name" value="6hp_glycosidase-like_sf"/>
</dbReference>
<dbReference type="InterPro" id="IPR001382">
    <property type="entry name" value="Glyco_hydro_47"/>
</dbReference>
<dbReference type="InterPro" id="IPR050749">
    <property type="entry name" value="Glycosyl_Hydrolase_47"/>
</dbReference>
<dbReference type="InterPro" id="IPR036026">
    <property type="entry name" value="Seven-hairpin_glycosidases"/>
</dbReference>
<dbReference type="PANTHER" id="PTHR11742:SF101">
    <property type="entry name" value="MANNOSYL-OLIGOSACCHARIDE ALPHA-1,2-MANNOSIDASE 1B"/>
    <property type="match status" value="1"/>
</dbReference>
<dbReference type="PANTHER" id="PTHR11742">
    <property type="entry name" value="MANNOSYL-OLIGOSACCHARIDE ALPHA-1,2-MANNOSIDASE-RELATED"/>
    <property type="match status" value="1"/>
</dbReference>
<dbReference type="Pfam" id="PF01532">
    <property type="entry name" value="Glyco_hydro_47"/>
    <property type="match status" value="1"/>
</dbReference>
<dbReference type="PRINTS" id="PR00747">
    <property type="entry name" value="GLYHDRLASE47"/>
</dbReference>
<dbReference type="SUPFAM" id="SSF48225">
    <property type="entry name" value="Seven-hairpin glycosidases"/>
    <property type="match status" value="1"/>
</dbReference>
<feature type="signal peptide" evidence="5">
    <location>
        <begin position="1"/>
        <end position="18"/>
    </location>
</feature>
<feature type="chain" id="PRO_0000394816" description="Probable mannosyl-oligosaccharide alpha-1,2-mannosidase 1B">
    <location>
        <begin position="19"/>
        <end position="511"/>
    </location>
</feature>
<feature type="active site" description="Proton donor" evidence="2">
    <location>
        <position position="370"/>
    </location>
</feature>
<feature type="binding site" evidence="3">
    <location>
        <position position="501"/>
    </location>
    <ligand>
        <name>Ca(2+)</name>
        <dbReference type="ChEBI" id="CHEBI:29108"/>
    </ligand>
</feature>
<feature type="glycosylation site" description="N-linked (GlcNAc...) asparagine" evidence="5">
    <location>
        <position position="90"/>
    </location>
</feature>
<feature type="glycosylation site" description="N-linked (GlcNAc...) asparagine" evidence="5">
    <location>
        <position position="177"/>
    </location>
</feature>
<feature type="glycosylation site" description="N-linked (GlcNAc...) asparagine" evidence="5">
    <location>
        <position position="433"/>
    </location>
</feature>
<feature type="disulfide bond" evidence="3">
    <location>
        <begin position="327"/>
        <end position="356"/>
    </location>
</feature>
<gene>
    <name type="primary">mns1B</name>
    <name type="synonym">msdS</name>
    <name type="ORF">ACLA_020870</name>
</gene>
<name>MNS1B_ASPCL</name>
<protein>
    <recommendedName>
        <fullName>Probable mannosyl-oligosaccharide alpha-1,2-mannosidase 1B</fullName>
        <ecNumber evidence="3">3.2.1.113</ecNumber>
    </recommendedName>
    <alternativeName>
        <fullName>Class I alpha-mannosidase 1B</fullName>
    </alternativeName>
    <alternativeName>
        <fullName>Man(9)-alpha-mannosidase 1B</fullName>
    </alternativeName>
</protein>
<reference key="1">
    <citation type="journal article" date="2008" name="PLoS Genet.">
        <title>Genomic islands in the pathogenic filamentous fungus Aspergillus fumigatus.</title>
        <authorList>
            <person name="Fedorova N.D."/>
            <person name="Khaldi N."/>
            <person name="Joardar V.S."/>
            <person name="Maiti R."/>
            <person name="Amedeo P."/>
            <person name="Anderson M.J."/>
            <person name="Crabtree J."/>
            <person name="Silva J.C."/>
            <person name="Badger J.H."/>
            <person name="Albarraq A."/>
            <person name="Angiuoli S."/>
            <person name="Bussey H."/>
            <person name="Bowyer P."/>
            <person name="Cotty P.J."/>
            <person name="Dyer P.S."/>
            <person name="Egan A."/>
            <person name="Galens K."/>
            <person name="Fraser-Liggett C.M."/>
            <person name="Haas B.J."/>
            <person name="Inman J.M."/>
            <person name="Kent R."/>
            <person name="Lemieux S."/>
            <person name="Malavazi I."/>
            <person name="Orvis J."/>
            <person name="Roemer T."/>
            <person name="Ronning C.M."/>
            <person name="Sundaram J.P."/>
            <person name="Sutton G."/>
            <person name="Turner G."/>
            <person name="Venter J.C."/>
            <person name="White O.R."/>
            <person name="Whitty B.R."/>
            <person name="Youngman P."/>
            <person name="Wolfe K.H."/>
            <person name="Goldman G.H."/>
            <person name="Wortman J.R."/>
            <person name="Jiang B."/>
            <person name="Denning D.W."/>
            <person name="Nierman W.C."/>
        </authorList>
    </citation>
    <scope>NUCLEOTIDE SEQUENCE [LARGE SCALE GENOMIC DNA]</scope>
    <source>
        <strain>ATCC 1007 / CBS 513.65 / DSM 816 / NCTC 3887 / NRRL 1 / QM 1276 / 107</strain>
    </source>
</reference>
<keyword id="KW-0119">Carbohydrate metabolism</keyword>
<keyword id="KW-0968">Cytoplasmic vesicle</keyword>
<keyword id="KW-1015">Disulfide bond</keyword>
<keyword id="KW-0325">Glycoprotein</keyword>
<keyword id="KW-0326">Glycosidase</keyword>
<keyword id="KW-0378">Hydrolase</keyword>
<keyword id="KW-0479">Metal-binding</keyword>
<keyword id="KW-1185">Reference proteome</keyword>
<keyword id="KW-0732">Signal</keyword>
<organism>
    <name type="scientific">Aspergillus clavatus (strain ATCC 1007 / CBS 513.65 / DSM 816 / NCTC 3887 / NRRL 1 / QM 1276 / 107)</name>
    <dbReference type="NCBI Taxonomy" id="344612"/>
    <lineage>
        <taxon>Eukaryota</taxon>
        <taxon>Fungi</taxon>
        <taxon>Dikarya</taxon>
        <taxon>Ascomycota</taxon>
        <taxon>Pezizomycotina</taxon>
        <taxon>Eurotiomycetes</taxon>
        <taxon>Eurotiomycetidae</taxon>
        <taxon>Eurotiales</taxon>
        <taxon>Aspergillaceae</taxon>
        <taxon>Aspergillus</taxon>
        <taxon>Aspergillus subgen. Fumigati</taxon>
    </lineage>
</organism>
<accession>A1CP08</accession>
<evidence type="ECO:0000250" key="1"/>
<evidence type="ECO:0000250" key="2">
    <source>
        <dbReference type="UniProtKB" id="P31723"/>
    </source>
</evidence>
<evidence type="ECO:0000250" key="3">
    <source>
        <dbReference type="UniProtKB" id="P32906"/>
    </source>
</evidence>
<evidence type="ECO:0000250" key="4">
    <source>
        <dbReference type="UniProtKB" id="Q2ULB2"/>
    </source>
</evidence>
<evidence type="ECO:0000255" key="5"/>
<evidence type="ECO:0000305" key="6"/>